<comment type="function">
    <text evidence="1">Binds to 23S rRNA. Forms part of two intersubunit bridges in the 70S ribosome.</text>
</comment>
<comment type="subunit">
    <text evidence="1">Part of the 50S ribosomal subunit. Forms a cluster with proteins L3 and L19. In the 70S ribosome, L14 and L19 interact and together make contacts with the 16S rRNA in bridges B5 and B8.</text>
</comment>
<comment type="similarity">
    <text evidence="1">Belongs to the universal ribosomal protein uL14 family.</text>
</comment>
<feature type="chain" id="PRO_1000144293" description="Large ribosomal subunit protein uL14">
    <location>
        <begin position="1"/>
        <end position="122"/>
    </location>
</feature>
<reference key="1">
    <citation type="journal article" date="2008" name="J. Bacteriol.">
        <title>Complete genome sequence of Leuconostoc citreum KM20.</title>
        <authorList>
            <person name="Kim J.F."/>
            <person name="Jeong H."/>
            <person name="Lee J.-S."/>
            <person name="Choi S.-H."/>
            <person name="Ha M."/>
            <person name="Hur C.-G."/>
            <person name="Kim J.-S."/>
            <person name="Lee S."/>
            <person name="Park H.-S."/>
            <person name="Park Y.-H."/>
            <person name="Oh T.K."/>
        </authorList>
    </citation>
    <scope>NUCLEOTIDE SEQUENCE [LARGE SCALE GENOMIC DNA]</scope>
    <source>
        <strain>KM20</strain>
    </source>
</reference>
<accession>B1MW04</accession>
<proteinExistence type="inferred from homology"/>
<evidence type="ECO:0000255" key="1">
    <source>
        <dbReference type="HAMAP-Rule" id="MF_01367"/>
    </source>
</evidence>
<evidence type="ECO:0000305" key="2"/>
<gene>
    <name evidence="1" type="primary">rplN</name>
    <name type="ordered locus">LCK_01585</name>
</gene>
<keyword id="KW-1185">Reference proteome</keyword>
<keyword id="KW-0687">Ribonucleoprotein</keyword>
<keyword id="KW-0689">Ribosomal protein</keyword>
<keyword id="KW-0694">RNA-binding</keyword>
<keyword id="KW-0699">rRNA-binding</keyword>
<organism>
    <name type="scientific">Leuconostoc citreum (strain KM20)</name>
    <dbReference type="NCBI Taxonomy" id="349519"/>
    <lineage>
        <taxon>Bacteria</taxon>
        <taxon>Bacillati</taxon>
        <taxon>Bacillota</taxon>
        <taxon>Bacilli</taxon>
        <taxon>Lactobacillales</taxon>
        <taxon>Lactobacillaceae</taxon>
        <taxon>Leuconostoc</taxon>
    </lineage>
</organism>
<sequence length="122" mass="13083">MIQQESRLKVADNSGAREILTIKVLGGSGRKFAGVGDMIVATVKQAIPGGNVKKGDVVKAVIVRTVSDVRRADGSYINFDENAAVIVKDDKSPVGTRIFGPVARELRDSDYMRIVSLAPEVL</sequence>
<name>RL14_LEUCK</name>
<protein>
    <recommendedName>
        <fullName evidence="1">Large ribosomal subunit protein uL14</fullName>
    </recommendedName>
    <alternativeName>
        <fullName evidence="2">50S ribosomal protein L14</fullName>
    </alternativeName>
</protein>
<dbReference type="EMBL" id="DQ489736">
    <property type="protein sequence ID" value="ACA83408.1"/>
    <property type="molecule type" value="Genomic_DNA"/>
</dbReference>
<dbReference type="RefSeq" id="WP_004899448.1">
    <property type="nucleotide sequence ID" value="NC_010471.1"/>
</dbReference>
<dbReference type="SMR" id="B1MW04"/>
<dbReference type="STRING" id="349519.LCK_01585"/>
<dbReference type="GeneID" id="61103251"/>
<dbReference type="KEGG" id="lci:LCK_01585"/>
<dbReference type="eggNOG" id="COG0093">
    <property type="taxonomic scope" value="Bacteria"/>
</dbReference>
<dbReference type="HOGENOM" id="CLU_095071_2_1_9"/>
<dbReference type="OrthoDB" id="9806379at2"/>
<dbReference type="Proteomes" id="UP000002166">
    <property type="component" value="Chromosome"/>
</dbReference>
<dbReference type="GO" id="GO:0022625">
    <property type="term" value="C:cytosolic large ribosomal subunit"/>
    <property type="evidence" value="ECO:0007669"/>
    <property type="project" value="TreeGrafter"/>
</dbReference>
<dbReference type="GO" id="GO:0070180">
    <property type="term" value="F:large ribosomal subunit rRNA binding"/>
    <property type="evidence" value="ECO:0007669"/>
    <property type="project" value="TreeGrafter"/>
</dbReference>
<dbReference type="GO" id="GO:0003735">
    <property type="term" value="F:structural constituent of ribosome"/>
    <property type="evidence" value="ECO:0007669"/>
    <property type="project" value="InterPro"/>
</dbReference>
<dbReference type="GO" id="GO:0006412">
    <property type="term" value="P:translation"/>
    <property type="evidence" value="ECO:0007669"/>
    <property type="project" value="UniProtKB-UniRule"/>
</dbReference>
<dbReference type="CDD" id="cd00337">
    <property type="entry name" value="Ribosomal_uL14"/>
    <property type="match status" value="1"/>
</dbReference>
<dbReference type="FunFam" id="2.40.150.20:FF:000001">
    <property type="entry name" value="50S ribosomal protein L14"/>
    <property type="match status" value="1"/>
</dbReference>
<dbReference type="Gene3D" id="2.40.150.20">
    <property type="entry name" value="Ribosomal protein L14"/>
    <property type="match status" value="1"/>
</dbReference>
<dbReference type="HAMAP" id="MF_01367">
    <property type="entry name" value="Ribosomal_uL14"/>
    <property type="match status" value="1"/>
</dbReference>
<dbReference type="InterPro" id="IPR000218">
    <property type="entry name" value="Ribosomal_uL14"/>
</dbReference>
<dbReference type="InterPro" id="IPR005745">
    <property type="entry name" value="Ribosomal_uL14_bac-type"/>
</dbReference>
<dbReference type="InterPro" id="IPR019972">
    <property type="entry name" value="Ribosomal_uL14_CS"/>
</dbReference>
<dbReference type="InterPro" id="IPR036853">
    <property type="entry name" value="Ribosomal_uL14_sf"/>
</dbReference>
<dbReference type="NCBIfam" id="TIGR01067">
    <property type="entry name" value="rplN_bact"/>
    <property type="match status" value="1"/>
</dbReference>
<dbReference type="PANTHER" id="PTHR11761">
    <property type="entry name" value="50S/60S RIBOSOMAL PROTEIN L14/L23"/>
    <property type="match status" value="1"/>
</dbReference>
<dbReference type="PANTHER" id="PTHR11761:SF3">
    <property type="entry name" value="LARGE RIBOSOMAL SUBUNIT PROTEIN UL14M"/>
    <property type="match status" value="1"/>
</dbReference>
<dbReference type="Pfam" id="PF00238">
    <property type="entry name" value="Ribosomal_L14"/>
    <property type="match status" value="1"/>
</dbReference>
<dbReference type="SMART" id="SM01374">
    <property type="entry name" value="Ribosomal_L14"/>
    <property type="match status" value="1"/>
</dbReference>
<dbReference type="SUPFAM" id="SSF50193">
    <property type="entry name" value="Ribosomal protein L14"/>
    <property type="match status" value="1"/>
</dbReference>
<dbReference type="PROSITE" id="PS00049">
    <property type="entry name" value="RIBOSOMAL_L14"/>
    <property type="match status" value="1"/>
</dbReference>